<name>TNR11_MOUSE</name>
<reference key="1">
    <citation type="journal article" date="1997" name="Nature">
        <title>A homologue of the TNF receptor and its ligand enhance T-cell growth and dendritic-cell function.</title>
        <authorList>
            <person name="Anderson D.M."/>
            <person name="Maraskovsky E."/>
            <person name="Billingsley W.L."/>
            <person name="Dougall W.C."/>
            <person name="Tometsko M.E."/>
            <person name="Roux E.R."/>
            <person name="Teepe M.C."/>
            <person name="DuBose R.F."/>
            <person name="Cosman D."/>
            <person name="Galibert L."/>
        </authorList>
    </citation>
    <scope>NUCLEOTIDE SEQUENCE [MRNA]</scope>
    <scope>FUNCTION</scope>
    <source>
        <tissue>Fetal liver</tissue>
    </source>
</reference>
<reference key="2">
    <citation type="journal article" date="2004" name="Genome Res.">
        <title>The status, quality, and expansion of the NIH full-length cDNA project: the Mammalian Gene Collection (MGC).</title>
        <authorList>
            <consortium name="The MGC Project Team"/>
        </authorList>
    </citation>
    <scope>NUCLEOTIDE SEQUENCE [LARGE SCALE MRNA]</scope>
    <source>
        <tissue>Mammary gland</tissue>
    </source>
</reference>
<reference key="3">
    <citation type="journal article" date="1998" name="Biochem. Biophys. Res. Commun.">
        <title>RANK is the essential signaling receptor for osteoclast differentiation factor in osteoclastogenesis.</title>
        <authorList>
            <person name="Nakagawa N."/>
            <person name="Kinosaki M."/>
            <person name="Yamaguchi K."/>
            <person name="Shima N."/>
            <person name="Yasuda H."/>
            <person name="Yano K."/>
            <person name="Morinaga T."/>
            <person name="Higashio K."/>
        </authorList>
    </citation>
    <scope>FUNCTION</scope>
</reference>
<reference key="4">
    <citation type="journal article" date="2013" name="Cell Res.">
        <title>Early estrogen-induced gene 1, a novel RANK signaling component, is essential for osteoclastogenesis.</title>
        <authorList>
            <person name="Choi H.K."/>
            <person name="Kang H.R."/>
            <person name="Jung E."/>
            <person name="Kim T.E."/>
            <person name="Lin J.J."/>
            <person name="Lee S.Y."/>
        </authorList>
    </citation>
    <scope>FUNCTION</scope>
    <scope>IDENTIFICATION IN A COMPLEX WITH EEIG1; PLCY2; GAB2; TEC AND BTK</scope>
    <scope>INTERACTION WITH EEIG1</scope>
    <scope>SUBCELLULAR LOCATION</scope>
</reference>
<reference key="5">
    <citation type="journal article" date="2010" name="J. Immunol.">
        <title>Structural and functional insights of RANKL-RANK interaction and signaling.</title>
        <authorList>
            <person name="Liu C."/>
            <person name="Walter T.S."/>
            <person name="Huang P."/>
            <person name="Zhang S."/>
            <person name="Zhu X."/>
            <person name="Wu Y."/>
            <person name="Wedderburn L.R."/>
            <person name="Tang P."/>
            <person name="Owens R.J."/>
            <person name="Stuart D.I."/>
            <person name="Ren J."/>
            <person name="Gao B."/>
        </authorList>
    </citation>
    <scope>X-RAY CRYSTALLOGRAPHY (2.01 ANGSTROMS) OF 26-210 ALONE AND IN COMPLEX WITH TNFSF11</scope>
    <scope>DISULFIDE BONDS</scope>
    <scope>FUNCTION</scope>
    <scope>SODIUM-BINDING SITE</scope>
    <scope>SUBUNIT</scope>
</reference>
<reference key="6">
    <citation type="journal article" date="2012" name="Structure">
        <title>RANKL employs distinct binding modes to engage RANK and the osteoprotegerin decoy receptor.</title>
        <authorList>
            <person name="Nelson C.A."/>
            <person name="Warren J.T."/>
            <person name="Wang M.W."/>
            <person name="Teitelbaum S.L."/>
            <person name="Fremont D.H."/>
        </authorList>
    </citation>
    <scope>X-RAY CRYSTALLOGRAPHY (2.7 ANGSTROMS) OF 31-198 IN COMPLEX WITH TNFSF11/RANKL</scope>
    <scope>DISULFIDE BONDS</scope>
    <scope>GLYCOSYLATION AT ASN-106</scope>
</reference>
<feature type="signal peptide" evidence="2">
    <location>
        <begin position="1"/>
        <end position="30"/>
    </location>
</feature>
<feature type="chain" id="PRO_0000034586" description="Tumor necrosis factor receptor superfamily member 11A">
    <location>
        <begin position="31"/>
        <end position="625"/>
    </location>
</feature>
<feature type="topological domain" description="Extracellular" evidence="2">
    <location>
        <begin position="31"/>
        <end position="214"/>
    </location>
</feature>
<feature type="transmembrane region" description="Helical" evidence="2">
    <location>
        <begin position="215"/>
        <end position="234"/>
    </location>
</feature>
<feature type="topological domain" description="Cytoplasmic" evidence="2">
    <location>
        <begin position="235"/>
        <end position="625"/>
    </location>
</feature>
<feature type="repeat" description="TNFR-Cys 1">
    <location>
        <begin position="35"/>
        <end position="69"/>
    </location>
</feature>
<feature type="repeat" description="TNFR-Cys 2">
    <location>
        <begin position="72"/>
        <end position="113"/>
    </location>
</feature>
<feature type="repeat" description="TNFR-Cys 3">
    <location>
        <begin position="115"/>
        <end position="152"/>
    </location>
</feature>
<feature type="repeat" description="TNFR-Cys 4">
    <location>
        <begin position="155"/>
        <end position="195"/>
    </location>
</feature>
<feature type="region of interest" description="Disordered" evidence="3">
    <location>
        <begin position="331"/>
        <end position="356"/>
    </location>
</feature>
<feature type="region of interest" description="Disordered" evidence="3">
    <location>
        <begin position="388"/>
        <end position="413"/>
    </location>
</feature>
<feature type="region of interest" description="Disordered" evidence="3">
    <location>
        <begin position="479"/>
        <end position="524"/>
    </location>
</feature>
<feature type="region of interest" description="Required for interaction with EEIG1 and osteoclast differentiation" evidence="6">
    <location>
        <begin position="532"/>
        <end position="537"/>
    </location>
</feature>
<feature type="region of interest" description="Disordered" evidence="3">
    <location>
        <begin position="542"/>
        <end position="625"/>
    </location>
</feature>
<feature type="compositionally biased region" description="Low complexity" evidence="3">
    <location>
        <begin position="499"/>
        <end position="511"/>
    </location>
</feature>
<feature type="compositionally biased region" description="Polar residues" evidence="3">
    <location>
        <begin position="512"/>
        <end position="524"/>
    </location>
</feature>
<feature type="compositionally biased region" description="Low complexity" evidence="3">
    <location>
        <begin position="543"/>
        <end position="558"/>
    </location>
</feature>
<feature type="compositionally biased region" description="Basic and acidic residues" evidence="3">
    <location>
        <begin position="561"/>
        <end position="571"/>
    </location>
</feature>
<feature type="compositionally biased region" description="Polar residues" evidence="3">
    <location>
        <begin position="603"/>
        <end position="625"/>
    </location>
</feature>
<feature type="binding site">
    <location>
        <position position="134"/>
    </location>
    <ligand>
        <name>Na(+)</name>
        <dbReference type="ChEBI" id="CHEBI:29101"/>
    </ligand>
</feature>
<feature type="binding site">
    <location>
        <position position="135"/>
    </location>
    <ligand>
        <name>Na(+)</name>
        <dbReference type="ChEBI" id="CHEBI:29101"/>
    </ligand>
</feature>
<feature type="binding site">
    <location>
        <position position="138"/>
    </location>
    <ligand>
        <name>Na(+)</name>
        <dbReference type="ChEBI" id="CHEBI:29101"/>
    </ligand>
</feature>
<feature type="binding site">
    <location>
        <position position="161"/>
    </location>
    <ligand>
        <name>Na(+)</name>
        <dbReference type="ChEBI" id="CHEBI:29101"/>
    </ligand>
</feature>
<feature type="binding site">
    <location>
        <position position="163"/>
    </location>
    <ligand>
        <name>Na(+)</name>
        <dbReference type="ChEBI" id="CHEBI:29101"/>
    </ligand>
</feature>
<feature type="modified residue" description="Phosphoserine" evidence="1">
    <location>
        <position position="571"/>
    </location>
</feature>
<feature type="glycosylation site" description="N-linked (GlcNAc...) asparagine" evidence="5">
    <location>
        <position position="106"/>
    </location>
</feature>
<feature type="glycosylation site" description="N-linked (GlcNAc...) asparagine" evidence="2">
    <location>
        <position position="175"/>
    </location>
</feature>
<feature type="disulfide bond">
    <location>
        <begin position="35"/>
        <end position="47"/>
    </location>
</feature>
<feature type="disulfide bond">
    <location>
        <begin position="48"/>
        <end position="61"/>
    </location>
</feature>
<feature type="disulfide bond">
    <location>
        <begin position="51"/>
        <end position="69"/>
    </location>
</feature>
<feature type="disulfide bond">
    <location>
        <begin position="72"/>
        <end position="87"/>
    </location>
</feature>
<feature type="disulfide bond">
    <location>
        <begin position="93"/>
        <end position="113"/>
    </location>
</feature>
<feature type="disulfide bond">
    <location>
        <begin position="115"/>
        <end position="128"/>
    </location>
</feature>
<feature type="disulfide bond">
    <location>
        <begin position="125"/>
        <end position="127"/>
    </location>
</feature>
<feature type="disulfide bond">
    <location>
        <begin position="134"/>
        <end position="152"/>
    </location>
</feature>
<feature type="disulfide bond">
    <location>
        <begin position="155"/>
        <end position="170"/>
    </location>
</feature>
<feature type="disulfide bond">
    <location>
        <begin position="176"/>
        <end position="195"/>
    </location>
</feature>
<feature type="sequence conflict" description="In Ref. 2; AAH19185." evidence="9" ref="2">
    <original>R</original>
    <variation>K</variation>
    <location>
        <position position="494"/>
    </location>
</feature>
<feature type="turn" evidence="10">
    <location>
        <begin position="37"/>
        <end position="39"/>
    </location>
</feature>
<feature type="strand" evidence="10">
    <location>
        <begin position="40"/>
        <end position="43"/>
    </location>
</feature>
<feature type="strand" evidence="10">
    <location>
        <begin position="46"/>
        <end position="49"/>
    </location>
</feature>
<feature type="strand" evidence="10">
    <location>
        <begin position="55"/>
        <end position="59"/>
    </location>
</feature>
<feature type="strand" evidence="11">
    <location>
        <begin position="63"/>
        <end position="65"/>
    </location>
</feature>
<feature type="strand" evidence="10">
    <location>
        <begin position="68"/>
        <end position="71"/>
    </location>
</feature>
<feature type="strand" evidence="10">
    <location>
        <begin position="80"/>
        <end position="82"/>
    </location>
</feature>
<feature type="helix" evidence="10">
    <location>
        <begin position="95"/>
        <end position="97"/>
    </location>
</feature>
<feature type="strand" evidence="10">
    <location>
        <begin position="99"/>
        <end position="103"/>
    </location>
</feature>
<feature type="strand" evidence="10">
    <location>
        <begin position="107"/>
        <end position="109"/>
    </location>
</feature>
<feature type="strand" evidence="10">
    <location>
        <begin position="112"/>
        <end position="115"/>
    </location>
</feature>
<feature type="strand" evidence="10">
    <location>
        <begin position="119"/>
        <end position="122"/>
    </location>
</feature>
<feature type="turn" evidence="10">
    <location>
        <begin position="123"/>
        <end position="126"/>
    </location>
</feature>
<feature type="strand" evidence="10">
    <location>
        <begin position="127"/>
        <end position="130"/>
    </location>
</feature>
<feature type="strand" evidence="10">
    <location>
        <begin position="138"/>
        <end position="140"/>
    </location>
</feature>
<feature type="strand" evidence="10">
    <location>
        <begin position="142"/>
        <end position="145"/>
    </location>
</feature>
<feature type="strand" evidence="12">
    <location>
        <begin position="146"/>
        <end position="148"/>
    </location>
</feature>
<feature type="strand" evidence="10">
    <location>
        <begin position="152"/>
        <end position="154"/>
    </location>
</feature>
<feature type="strand" evidence="10">
    <location>
        <begin position="165"/>
        <end position="167"/>
    </location>
</feature>
<feature type="helix" evidence="10">
    <location>
        <begin position="176"/>
        <end position="179"/>
    </location>
</feature>
<feature type="strand" evidence="10">
    <location>
        <begin position="183"/>
        <end position="185"/>
    </location>
</feature>
<feature type="strand" evidence="10">
    <location>
        <begin position="189"/>
        <end position="191"/>
    </location>
</feature>
<feature type="strand" evidence="11">
    <location>
        <begin position="194"/>
        <end position="196"/>
    </location>
</feature>
<dbReference type="EMBL" id="AF019046">
    <property type="protein sequence ID" value="AAB86810.1"/>
    <property type="molecule type" value="mRNA"/>
</dbReference>
<dbReference type="EMBL" id="BC019185">
    <property type="protein sequence ID" value="AAH19185.1"/>
    <property type="molecule type" value="mRNA"/>
</dbReference>
<dbReference type="CCDS" id="CCDS15207.1"/>
<dbReference type="RefSeq" id="NP_033425.3">
    <property type="nucleotide sequence ID" value="NM_009399.3"/>
</dbReference>
<dbReference type="PDB" id="3ME2">
    <property type="method" value="X-ray"/>
    <property type="resolution" value="2.80 A"/>
    <property type="chains" value="R=26-210"/>
</dbReference>
<dbReference type="PDB" id="3ME4">
    <property type="method" value="X-ray"/>
    <property type="resolution" value="2.01 A"/>
    <property type="chains" value="A/B=26-210"/>
</dbReference>
<dbReference type="PDB" id="3QBQ">
    <property type="method" value="X-ray"/>
    <property type="resolution" value="2.50 A"/>
    <property type="chains" value="B/D=32-201"/>
</dbReference>
<dbReference type="PDB" id="4GIQ">
    <property type="method" value="X-ray"/>
    <property type="resolution" value="2.70 A"/>
    <property type="chains" value="R=31-198"/>
</dbReference>
<dbReference type="PDB" id="5BNQ">
    <property type="method" value="X-ray"/>
    <property type="resolution" value="2.80 A"/>
    <property type="chains" value="R=26-210"/>
</dbReference>
<dbReference type="PDBsum" id="3ME2"/>
<dbReference type="PDBsum" id="3ME4"/>
<dbReference type="PDBsum" id="3QBQ"/>
<dbReference type="PDBsum" id="4GIQ"/>
<dbReference type="PDBsum" id="5BNQ"/>
<dbReference type="SMR" id="O35305"/>
<dbReference type="BioGRID" id="204246">
    <property type="interactions" value="5"/>
</dbReference>
<dbReference type="CORUM" id="O35305"/>
<dbReference type="DIP" id="DIP-48710N"/>
<dbReference type="ELM" id="O35305"/>
<dbReference type="FunCoup" id="O35305">
    <property type="interactions" value="548"/>
</dbReference>
<dbReference type="IntAct" id="O35305">
    <property type="interactions" value="11"/>
</dbReference>
<dbReference type="MINT" id="O35305"/>
<dbReference type="STRING" id="10090.ENSMUSP00000027559"/>
<dbReference type="GlyCosmos" id="O35305">
    <property type="glycosylation" value="2 sites, No reported glycans"/>
</dbReference>
<dbReference type="GlyGen" id="O35305">
    <property type="glycosylation" value="2 sites, 1 N-linked glycan (1 site)"/>
</dbReference>
<dbReference type="iPTMnet" id="O35305"/>
<dbReference type="PhosphoSitePlus" id="O35305"/>
<dbReference type="PaxDb" id="10090-ENSMUSP00000027559"/>
<dbReference type="PeptideAtlas" id="O35305"/>
<dbReference type="ProteomicsDB" id="260632"/>
<dbReference type="Antibodypedia" id="4165">
    <property type="antibodies" value="801 antibodies from 43 providers"/>
</dbReference>
<dbReference type="DNASU" id="21934"/>
<dbReference type="Ensembl" id="ENSMUST00000027559.9">
    <property type="protein sequence ID" value="ENSMUSP00000027559.7"/>
    <property type="gene ID" value="ENSMUSG00000026321.9"/>
</dbReference>
<dbReference type="GeneID" id="21934"/>
<dbReference type="KEGG" id="mmu:21934"/>
<dbReference type="UCSC" id="uc007cgp.1">
    <property type="organism name" value="mouse"/>
</dbReference>
<dbReference type="AGR" id="MGI:1314891"/>
<dbReference type="CTD" id="8792"/>
<dbReference type="MGI" id="MGI:1314891">
    <property type="gene designation" value="Tnfrsf11a"/>
</dbReference>
<dbReference type="VEuPathDB" id="HostDB:ENSMUSG00000026321"/>
<dbReference type="eggNOG" id="ENOG502RWJI">
    <property type="taxonomic scope" value="Eukaryota"/>
</dbReference>
<dbReference type="GeneTree" id="ENSGT00940000161211"/>
<dbReference type="HOGENOM" id="CLU_026571_0_0_1"/>
<dbReference type="InParanoid" id="O35305"/>
<dbReference type="OMA" id="CQRNTIC"/>
<dbReference type="OrthoDB" id="9889060at2759"/>
<dbReference type="PhylomeDB" id="O35305"/>
<dbReference type="TreeFam" id="TF331157"/>
<dbReference type="Reactome" id="R-MMU-5668541">
    <property type="pathway name" value="TNFR2 non-canonical NF-kB pathway"/>
</dbReference>
<dbReference type="Reactome" id="R-MMU-5676594">
    <property type="pathway name" value="TNF receptor superfamily (TNFSF) members mediating non-canonical NF-kB pathway"/>
</dbReference>
<dbReference type="BioGRID-ORCS" id="21934">
    <property type="hits" value="2 hits in 76 CRISPR screens"/>
</dbReference>
<dbReference type="ChiTaRS" id="Tnfrsf11a">
    <property type="organism name" value="mouse"/>
</dbReference>
<dbReference type="EvolutionaryTrace" id="O35305"/>
<dbReference type="PRO" id="PR:O35305"/>
<dbReference type="Proteomes" id="UP000000589">
    <property type="component" value="Chromosome 1"/>
</dbReference>
<dbReference type="RNAct" id="O35305">
    <property type="molecule type" value="protein"/>
</dbReference>
<dbReference type="Bgee" id="ENSMUSG00000026321">
    <property type="expression patterns" value="Expressed in left colon and 83 other cell types or tissues"/>
</dbReference>
<dbReference type="GO" id="GO:0009986">
    <property type="term" value="C:cell surface"/>
    <property type="evidence" value="ECO:0000314"/>
    <property type="project" value="MGI"/>
</dbReference>
<dbReference type="GO" id="GO:0005829">
    <property type="term" value="C:cytosol"/>
    <property type="evidence" value="ECO:0007669"/>
    <property type="project" value="Ensembl"/>
</dbReference>
<dbReference type="GO" id="GO:0009897">
    <property type="term" value="C:external side of plasma membrane"/>
    <property type="evidence" value="ECO:0007669"/>
    <property type="project" value="Ensembl"/>
</dbReference>
<dbReference type="GO" id="GO:0045121">
    <property type="term" value="C:membrane raft"/>
    <property type="evidence" value="ECO:0000314"/>
    <property type="project" value="UniProtKB"/>
</dbReference>
<dbReference type="GO" id="GO:0019955">
    <property type="term" value="F:cytokine binding"/>
    <property type="evidence" value="ECO:0007669"/>
    <property type="project" value="Ensembl"/>
</dbReference>
<dbReference type="GO" id="GO:0046872">
    <property type="term" value="F:metal ion binding"/>
    <property type="evidence" value="ECO:0007669"/>
    <property type="project" value="UniProtKB-KW"/>
</dbReference>
<dbReference type="GO" id="GO:0005031">
    <property type="term" value="F:tumor necrosis factor receptor activity"/>
    <property type="evidence" value="ECO:0000315"/>
    <property type="project" value="BHF-UCL"/>
</dbReference>
<dbReference type="GO" id="GO:0002250">
    <property type="term" value="P:adaptive immune response"/>
    <property type="evidence" value="ECO:0007669"/>
    <property type="project" value="Ensembl"/>
</dbReference>
<dbReference type="GO" id="GO:0034224">
    <property type="term" value="P:cellular response to zinc ion starvation"/>
    <property type="evidence" value="ECO:0007669"/>
    <property type="project" value="Ensembl"/>
</dbReference>
<dbReference type="GO" id="GO:0060086">
    <property type="term" value="P:circadian temperature homeostasis"/>
    <property type="evidence" value="ECO:0000315"/>
    <property type="project" value="BHF-UCL"/>
</dbReference>
<dbReference type="GO" id="GO:0048535">
    <property type="term" value="P:lymph node development"/>
    <property type="evidence" value="ECO:0000315"/>
    <property type="project" value="MGI"/>
</dbReference>
<dbReference type="GO" id="GO:0060749">
    <property type="term" value="P:mammary gland alveolus development"/>
    <property type="evidence" value="ECO:0000315"/>
    <property type="project" value="MGI"/>
</dbReference>
<dbReference type="GO" id="GO:0072674">
    <property type="term" value="P:multinuclear osteoclast differentiation"/>
    <property type="evidence" value="ECO:0000315"/>
    <property type="project" value="MGI"/>
</dbReference>
<dbReference type="GO" id="GO:0001503">
    <property type="term" value="P:ossification"/>
    <property type="evidence" value="ECO:0000315"/>
    <property type="project" value="MGI"/>
</dbReference>
<dbReference type="GO" id="GO:0045780">
    <property type="term" value="P:positive regulation of bone resorption"/>
    <property type="evidence" value="ECO:0000315"/>
    <property type="project" value="MGI"/>
</dbReference>
<dbReference type="GO" id="GO:0043123">
    <property type="term" value="P:positive regulation of canonical NF-kappaB signal transduction"/>
    <property type="evidence" value="ECO:0007669"/>
    <property type="project" value="Ensembl"/>
</dbReference>
<dbReference type="GO" id="GO:0070374">
    <property type="term" value="P:positive regulation of ERK1 and ERK2 cascade"/>
    <property type="evidence" value="ECO:0007669"/>
    <property type="project" value="Ensembl"/>
</dbReference>
<dbReference type="GO" id="GO:0071812">
    <property type="term" value="P:positive regulation of fever generation by positive regulation of prostaglandin secretion"/>
    <property type="evidence" value="ECO:0000315"/>
    <property type="project" value="BHF-UCL"/>
</dbReference>
<dbReference type="GO" id="GO:0046330">
    <property type="term" value="P:positive regulation of JNK cascade"/>
    <property type="evidence" value="ECO:0007669"/>
    <property type="project" value="Ensembl"/>
</dbReference>
<dbReference type="GO" id="GO:0045672">
    <property type="term" value="P:positive regulation of osteoclast differentiation"/>
    <property type="evidence" value="ECO:0000315"/>
    <property type="project" value="UniProtKB"/>
</dbReference>
<dbReference type="GO" id="GO:0045471">
    <property type="term" value="P:response to ethanol"/>
    <property type="evidence" value="ECO:0007669"/>
    <property type="project" value="Ensembl"/>
</dbReference>
<dbReference type="GO" id="GO:0032868">
    <property type="term" value="P:response to insulin"/>
    <property type="evidence" value="ECO:0007669"/>
    <property type="project" value="Ensembl"/>
</dbReference>
<dbReference type="GO" id="GO:0070555">
    <property type="term" value="P:response to interleukin-1"/>
    <property type="evidence" value="ECO:0000315"/>
    <property type="project" value="BHF-UCL"/>
</dbReference>
<dbReference type="GO" id="GO:0032496">
    <property type="term" value="P:response to lipopolysaccharide"/>
    <property type="evidence" value="ECO:0000315"/>
    <property type="project" value="BHF-UCL"/>
</dbReference>
<dbReference type="GO" id="GO:0009612">
    <property type="term" value="P:response to mechanical stimulus"/>
    <property type="evidence" value="ECO:0007669"/>
    <property type="project" value="Ensembl"/>
</dbReference>
<dbReference type="GO" id="GO:0034612">
    <property type="term" value="P:response to tumor necrosis factor"/>
    <property type="evidence" value="ECO:0000315"/>
    <property type="project" value="BHF-UCL"/>
</dbReference>
<dbReference type="GO" id="GO:0033209">
    <property type="term" value="P:tumor necrosis factor-mediated signaling pathway"/>
    <property type="evidence" value="ECO:0000315"/>
    <property type="project" value="BHF-UCL"/>
</dbReference>
<dbReference type="CDD" id="cd13411">
    <property type="entry name" value="TNFRSF11A"/>
    <property type="match status" value="1"/>
</dbReference>
<dbReference type="FunFam" id="2.10.50.10:FF:000015">
    <property type="entry name" value="TNF receptor superfamily member 11a"/>
    <property type="match status" value="1"/>
</dbReference>
<dbReference type="FunFam" id="2.10.50.10:FF:000019">
    <property type="entry name" value="Tumor necrosis factor receptor superfamily member 11A"/>
    <property type="match status" value="1"/>
</dbReference>
<dbReference type="Gene3D" id="2.10.50.10">
    <property type="entry name" value="Tumor Necrosis Factor Receptor, subunit A, domain 2"/>
    <property type="match status" value="2"/>
</dbReference>
<dbReference type="InterPro" id="IPR041648">
    <property type="entry name" value="RANK_CRD_2"/>
</dbReference>
<dbReference type="InterPro" id="IPR001368">
    <property type="entry name" value="TNFR/NGFR_Cys_rich_reg"/>
</dbReference>
<dbReference type="InterPro" id="IPR022323">
    <property type="entry name" value="TNFR_11"/>
</dbReference>
<dbReference type="InterPro" id="IPR022361">
    <property type="entry name" value="TNFR_11A"/>
</dbReference>
<dbReference type="InterPro" id="IPR053075">
    <property type="entry name" value="TNFRSF11A"/>
</dbReference>
<dbReference type="InterPro" id="IPR034040">
    <property type="entry name" value="TNFRSF11A_N"/>
</dbReference>
<dbReference type="PANTHER" id="PTHR47134">
    <property type="entry name" value="TUMOR NECROSIS FACTOR RECEPTOR SUPERFAMILY MEMBER 11A"/>
    <property type="match status" value="1"/>
</dbReference>
<dbReference type="PANTHER" id="PTHR47134:SF1">
    <property type="entry name" value="TUMOR NECROSIS FACTOR RECEPTOR SUPERFAMILY MEMBER 11A"/>
    <property type="match status" value="1"/>
</dbReference>
<dbReference type="Pfam" id="PF18278">
    <property type="entry name" value="RANK_CRD_2"/>
    <property type="match status" value="1"/>
</dbReference>
<dbReference type="Pfam" id="PF00020">
    <property type="entry name" value="TNFR_c6"/>
    <property type="match status" value="1"/>
</dbReference>
<dbReference type="PRINTS" id="PR01961">
    <property type="entry name" value="TNFACTORR11"/>
</dbReference>
<dbReference type="PRINTS" id="PR01974">
    <property type="entry name" value="TNFACTORR11A"/>
</dbReference>
<dbReference type="SMART" id="SM00208">
    <property type="entry name" value="TNFR"/>
    <property type="match status" value="4"/>
</dbReference>
<dbReference type="SUPFAM" id="SSF57586">
    <property type="entry name" value="TNF receptor-like"/>
    <property type="match status" value="2"/>
</dbReference>
<dbReference type="PROSITE" id="PS00652">
    <property type="entry name" value="TNFR_NGFR_1"/>
    <property type="match status" value="1"/>
</dbReference>
<dbReference type="PROSITE" id="PS50050">
    <property type="entry name" value="TNFR_NGFR_2"/>
    <property type="match status" value="1"/>
</dbReference>
<organism>
    <name type="scientific">Mus musculus</name>
    <name type="common">Mouse</name>
    <dbReference type="NCBI Taxonomy" id="10090"/>
    <lineage>
        <taxon>Eukaryota</taxon>
        <taxon>Metazoa</taxon>
        <taxon>Chordata</taxon>
        <taxon>Craniata</taxon>
        <taxon>Vertebrata</taxon>
        <taxon>Euteleostomi</taxon>
        <taxon>Mammalia</taxon>
        <taxon>Eutheria</taxon>
        <taxon>Euarchontoglires</taxon>
        <taxon>Glires</taxon>
        <taxon>Rodentia</taxon>
        <taxon>Myomorpha</taxon>
        <taxon>Muroidea</taxon>
        <taxon>Muridae</taxon>
        <taxon>Murinae</taxon>
        <taxon>Mus</taxon>
        <taxon>Mus</taxon>
    </lineage>
</organism>
<comment type="function">
    <text evidence="4 6 7 8">Receptor for TNFSF11/RANKL/TRANCE/OPGL; essential for RANKL-mediated osteoclastogenesis (PubMed:20483727, PubMed:23478294, PubMed:9878548). Its interaction with EEIG1 promotes osteoclastogenesis via facilitating the transcription of NFATC1 and activation of PLCG2 (PubMed:23478294). Involved in the regulation of interactions between T-cells and dendritic cells (PubMed:9367155).</text>
</comment>
<comment type="subunit">
    <text evidence="1 4 5 6">Binds to the clefts between the subunits of the TNFSF11 ligand trimer to form a heterohexamer (PubMed:20483727, PubMed:23039992). Part of a complex composed of EEIG1, TNFRSF11A/RANK, PLCG2, GAB2, TEC and BTK; complex formation increases in the presence of TNFSF11/RANKL (PubMed:23478294). Interacts with TRAF1, TRAF2, TRAF3, TRAF5 and TRAF6 (By similarity). Interacts (via cytoplasmic domain) with GAB2 (By similarity). Interacts (via cytoplasmic domain); with EEIG1 (via N-terminus); when in the presence of TNFSF11/RANKL (PubMed:23478294).</text>
</comment>
<comment type="interaction">
    <interactant intactId="EBI-647362">
        <id>O35305</id>
    </interactant>
    <interactant intactId="EBI-644645">
        <id>Q9Z1R2</id>
        <label>Bag6</label>
    </interactant>
    <organismsDiffer>false</organismsDiffer>
    <experiments>4</experiments>
</comment>
<comment type="interaction">
    <interactant intactId="EBI-647362">
        <id>O35305</id>
    </interactant>
    <interactant intactId="EBI-15890886">
        <id>O35235-1</id>
        <label>Tnfsf11</label>
    </interactant>
    <organismsDiffer>false</organismsDiffer>
    <experiments>6</experiments>
</comment>
<comment type="interaction">
    <interactant intactId="EBI-647362">
        <id>O35305</id>
    </interactant>
    <interactant intactId="EBI-520016">
        <id>P39429</id>
        <label>Traf2</label>
    </interactant>
    <organismsDiffer>false</organismsDiffer>
    <experiments>2</experiments>
</comment>
<comment type="interaction">
    <interactant intactId="EBI-647362">
        <id>O35305</id>
    </interactant>
    <interactant intactId="EBI-520135">
        <id>Q60803</id>
        <label>Traf3</label>
    </interactant>
    <organismsDiffer>false</organismsDiffer>
    <experiments>3</experiments>
</comment>
<comment type="interaction">
    <interactant intactId="EBI-647362">
        <id>O35305</id>
    </interactant>
    <interactant intactId="EBI-448028">
        <id>P70196</id>
        <label>Traf6</label>
    </interactant>
    <organismsDiffer>false</organismsDiffer>
    <experiments>2</experiments>
</comment>
<comment type="subcellular location">
    <subcellularLocation>
        <location evidence="1">Cell membrane</location>
        <topology evidence="2">Single-pass type I membrane protein</topology>
    </subcellularLocation>
    <subcellularLocation>
        <location evidence="6">Membrane raft</location>
    </subcellularLocation>
</comment>
<comment type="tissue specificity">
    <text>Ubiquitous expression with high levels in trabecular bone, thymus, small intestine, lung, brain and kidney. Weakly expressed in spleen and bone marrow.</text>
</comment>
<evidence type="ECO:0000250" key="1">
    <source>
        <dbReference type="UniProtKB" id="Q9Y6Q6"/>
    </source>
</evidence>
<evidence type="ECO:0000255" key="2"/>
<evidence type="ECO:0000256" key="3">
    <source>
        <dbReference type="SAM" id="MobiDB-lite"/>
    </source>
</evidence>
<evidence type="ECO:0000269" key="4">
    <source>
    </source>
</evidence>
<evidence type="ECO:0000269" key="5">
    <source>
    </source>
</evidence>
<evidence type="ECO:0000269" key="6">
    <source>
    </source>
</evidence>
<evidence type="ECO:0000269" key="7">
    <source>
    </source>
</evidence>
<evidence type="ECO:0000269" key="8">
    <source>
    </source>
</evidence>
<evidence type="ECO:0000305" key="9"/>
<evidence type="ECO:0007829" key="10">
    <source>
        <dbReference type="PDB" id="3ME4"/>
    </source>
</evidence>
<evidence type="ECO:0007829" key="11">
    <source>
        <dbReference type="PDB" id="3QBQ"/>
    </source>
</evidence>
<evidence type="ECO:0007829" key="12">
    <source>
        <dbReference type="PDB" id="4GIQ"/>
    </source>
</evidence>
<protein>
    <recommendedName>
        <fullName>Tumor necrosis factor receptor superfamily member 11A</fullName>
    </recommendedName>
    <alternativeName>
        <fullName>Osteoclast differentiation factor receptor</fullName>
        <shortName>ODFR</shortName>
    </alternativeName>
    <alternativeName>
        <fullName>Receptor activator of NF-KB</fullName>
    </alternativeName>
    <cdAntigenName>CD265</cdAntigenName>
</protein>
<keyword id="KW-0002">3D-structure</keyword>
<keyword id="KW-1003">Cell membrane</keyword>
<keyword id="KW-1015">Disulfide bond</keyword>
<keyword id="KW-0325">Glycoprotein</keyword>
<keyword id="KW-0472">Membrane</keyword>
<keyword id="KW-0479">Metal-binding</keyword>
<keyword id="KW-0597">Phosphoprotein</keyword>
<keyword id="KW-0675">Receptor</keyword>
<keyword id="KW-1185">Reference proteome</keyword>
<keyword id="KW-0677">Repeat</keyword>
<keyword id="KW-0732">Signal</keyword>
<keyword id="KW-0915">Sodium</keyword>
<keyword id="KW-0812">Transmembrane</keyword>
<keyword id="KW-1133">Transmembrane helix</keyword>
<accession>O35305</accession>
<accession>Q8VCT7</accession>
<sequence>MAPRARRRRQLPAPLLALCVLLVPLQVTLQVTPPCTQERHYEHLGRCCSRCEPGKYLSSKCTPTSDSVCLPCGPDEYLDTWNEEDKCLLHKVCDAGKALVAVDPGNHTAPRRCACTAGYHWNSDCECCRRNTECAPGFGAQHPLQLNKDTVCTPCLLGFFSDVFSSTDKCKPWTNCTLLGKLEAHQGTTESDVVCSSSMTLRRPPKEAQAYLPSLIVLLLFISVVVVAAIIFGVYYRKGGKALTANLWNWVNDACSSLSGNKESSGDRCAGSHSATSSQQEVCEGILLMTREEKMVPEDGAGVCGPVCAAGGPWAEVRDSRTFTLVSEVETQGDLSRKIPTEDEYTDRPSQPSTGSLLLIQQGSKSIPPFQEPLEVGENDSLSQCFTGTESTVDSEGCDFTEPPSRTDSMPVSPEKHLTKEIEGDSCLPWVVSSNSTDGYTGSGNTPGEDHEPFPGSLKCGPLPQCAYSMGFPSEAAASMAEAGVRPQDRADERGASGSGSSPSDQPPASGNVTGNSNSTFISSGQVMNFKGDIIVVYVSQTSQEGPGSAEPESEPVGRPVQEETLAHRDSFAGTAPRFPDVCATGAGLQEQGAPRQKDGTSRPVQEQGGAQTSLHTQGSGQCAE</sequence>
<proteinExistence type="evidence at protein level"/>
<gene>
    <name type="primary">Tnfrsf11a</name>
    <name type="synonym">Rank</name>
</gene>